<evidence type="ECO:0000255" key="1">
    <source>
        <dbReference type="HAMAP-Rule" id="MF_01227"/>
    </source>
</evidence>
<gene>
    <name evidence="1" type="primary">pyrG</name>
    <name type="ordered locus">Mkms_2988</name>
</gene>
<dbReference type="EC" id="6.3.4.2" evidence="1"/>
<dbReference type="EMBL" id="CP000518">
    <property type="protein sequence ID" value="ABL92182.1"/>
    <property type="molecule type" value="Genomic_DNA"/>
</dbReference>
<dbReference type="SMR" id="A1UH74"/>
<dbReference type="STRING" id="189918.Mkms_2988"/>
<dbReference type="MEROPS" id="C26.964"/>
<dbReference type="KEGG" id="mkm:Mkms_2988"/>
<dbReference type="HOGENOM" id="CLU_011675_5_0_11"/>
<dbReference type="OrthoDB" id="9801107at2"/>
<dbReference type="UniPathway" id="UPA00159">
    <property type="reaction ID" value="UER00277"/>
</dbReference>
<dbReference type="GO" id="GO:0005829">
    <property type="term" value="C:cytosol"/>
    <property type="evidence" value="ECO:0007669"/>
    <property type="project" value="TreeGrafter"/>
</dbReference>
<dbReference type="GO" id="GO:0005524">
    <property type="term" value="F:ATP binding"/>
    <property type="evidence" value="ECO:0007669"/>
    <property type="project" value="UniProtKB-KW"/>
</dbReference>
<dbReference type="GO" id="GO:0003883">
    <property type="term" value="F:CTP synthase activity"/>
    <property type="evidence" value="ECO:0007669"/>
    <property type="project" value="UniProtKB-UniRule"/>
</dbReference>
<dbReference type="GO" id="GO:0004359">
    <property type="term" value="F:glutaminase activity"/>
    <property type="evidence" value="ECO:0007669"/>
    <property type="project" value="RHEA"/>
</dbReference>
<dbReference type="GO" id="GO:0042802">
    <property type="term" value="F:identical protein binding"/>
    <property type="evidence" value="ECO:0007669"/>
    <property type="project" value="TreeGrafter"/>
</dbReference>
<dbReference type="GO" id="GO:0046872">
    <property type="term" value="F:metal ion binding"/>
    <property type="evidence" value="ECO:0007669"/>
    <property type="project" value="UniProtKB-KW"/>
</dbReference>
<dbReference type="GO" id="GO:0044210">
    <property type="term" value="P:'de novo' CTP biosynthetic process"/>
    <property type="evidence" value="ECO:0007669"/>
    <property type="project" value="UniProtKB-UniRule"/>
</dbReference>
<dbReference type="GO" id="GO:0019856">
    <property type="term" value="P:pyrimidine nucleobase biosynthetic process"/>
    <property type="evidence" value="ECO:0007669"/>
    <property type="project" value="TreeGrafter"/>
</dbReference>
<dbReference type="CDD" id="cd03113">
    <property type="entry name" value="CTPS_N"/>
    <property type="match status" value="1"/>
</dbReference>
<dbReference type="CDD" id="cd01746">
    <property type="entry name" value="GATase1_CTP_Synthase"/>
    <property type="match status" value="1"/>
</dbReference>
<dbReference type="FunFam" id="3.40.50.300:FF:000009">
    <property type="entry name" value="CTP synthase"/>
    <property type="match status" value="1"/>
</dbReference>
<dbReference type="FunFam" id="3.40.50.880:FF:000002">
    <property type="entry name" value="CTP synthase"/>
    <property type="match status" value="1"/>
</dbReference>
<dbReference type="Gene3D" id="3.40.50.880">
    <property type="match status" value="1"/>
</dbReference>
<dbReference type="Gene3D" id="3.40.50.300">
    <property type="entry name" value="P-loop containing nucleotide triphosphate hydrolases"/>
    <property type="match status" value="1"/>
</dbReference>
<dbReference type="HAMAP" id="MF_01227">
    <property type="entry name" value="PyrG"/>
    <property type="match status" value="1"/>
</dbReference>
<dbReference type="InterPro" id="IPR029062">
    <property type="entry name" value="Class_I_gatase-like"/>
</dbReference>
<dbReference type="InterPro" id="IPR004468">
    <property type="entry name" value="CTP_synthase"/>
</dbReference>
<dbReference type="InterPro" id="IPR017456">
    <property type="entry name" value="CTP_synthase_N"/>
</dbReference>
<dbReference type="InterPro" id="IPR017926">
    <property type="entry name" value="GATASE"/>
</dbReference>
<dbReference type="InterPro" id="IPR033828">
    <property type="entry name" value="GATase1_CTP_Synthase"/>
</dbReference>
<dbReference type="InterPro" id="IPR027417">
    <property type="entry name" value="P-loop_NTPase"/>
</dbReference>
<dbReference type="NCBIfam" id="NF003792">
    <property type="entry name" value="PRK05380.1"/>
    <property type="match status" value="1"/>
</dbReference>
<dbReference type="NCBIfam" id="TIGR00337">
    <property type="entry name" value="PyrG"/>
    <property type="match status" value="1"/>
</dbReference>
<dbReference type="PANTHER" id="PTHR11550">
    <property type="entry name" value="CTP SYNTHASE"/>
    <property type="match status" value="1"/>
</dbReference>
<dbReference type="PANTHER" id="PTHR11550:SF0">
    <property type="entry name" value="CTP SYNTHASE-RELATED"/>
    <property type="match status" value="1"/>
</dbReference>
<dbReference type="Pfam" id="PF06418">
    <property type="entry name" value="CTP_synth_N"/>
    <property type="match status" value="1"/>
</dbReference>
<dbReference type="Pfam" id="PF00117">
    <property type="entry name" value="GATase"/>
    <property type="match status" value="1"/>
</dbReference>
<dbReference type="SUPFAM" id="SSF52317">
    <property type="entry name" value="Class I glutamine amidotransferase-like"/>
    <property type="match status" value="1"/>
</dbReference>
<dbReference type="SUPFAM" id="SSF52540">
    <property type="entry name" value="P-loop containing nucleoside triphosphate hydrolases"/>
    <property type="match status" value="1"/>
</dbReference>
<dbReference type="PROSITE" id="PS51273">
    <property type="entry name" value="GATASE_TYPE_1"/>
    <property type="match status" value="1"/>
</dbReference>
<name>PYRG_MYCSK</name>
<reference key="1">
    <citation type="submission" date="2006-12" db="EMBL/GenBank/DDBJ databases">
        <title>Complete sequence of chromosome of Mycobacterium sp. KMS.</title>
        <authorList>
            <consortium name="US DOE Joint Genome Institute"/>
            <person name="Copeland A."/>
            <person name="Lucas S."/>
            <person name="Lapidus A."/>
            <person name="Barry K."/>
            <person name="Detter J.C."/>
            <person name="Glavina del Rio T."/>
            <person name="Hammon N."/>
            <person name="Israni S."/>
            <person name="Dalin E."/>
            <person name="Tice H."/>
            <person name="Pitluck S."/>
            <person name="Kiss H."/>
            <person name="Brettin T."/>
            <person name="Bruce D."/>
            <person name="Han C."/>
            <person name="Tapia R."/>
            <person name="Gilna P."/>
            <person name="Schmutz J."/>
            <person name="Larimer F."/>
            <person name="Land M."/>
            <person name="Hauser L."/>
            <person name="Kyrpides N."/>
            <person name="Mikhailova N."/>
            <person name="Miller C.D."/>
            <person name="Richardson P."/>
        </authorList>
    </citation>
    <scope>NUCLEOTIDE SEQUENCE [LARGE SCALE GENOMIC DNA]</scope>
    <source>
        <strain>KMS</strain>
    </source>
</reference>
<sequence>MPALRKHPQTATKHLFVTGGVVSSLGKGLTGSSLGQLLTARGLQVTMQKLDPYLNVDPGTMNPFQHGEVFVTEDGAETDLDVGHYERFLDRNLSGSANVTTGQIYSSVIAKERRGEYLGDTVQVIPHITDEIKSRILAMAAPDEHGNRPDVVITEVGGTVGDIESLPFLEAARQVRHEVGRENCFFLHCSLVPYMAPSGELKTKPTQHSVAALRSIGIQPDALILRCDRDVPEALKNKIALMCDVDIDGVISTPDAPSIYDIPKVLHREELDAYVVRRLNLPFRDVDWTQWNDLLKRVHEPHETVRIALVGKYIDLSDAYLSVTEALRAGGFFHHAKVEMRWVASDDCELDSGAAAALADVDGVLIPGGFGIRGIEGKIGAISYARKRGLPVLGLCLGLQCIVIEAARSVGITGANSAEFDPATPDPVISTMADQRDAVAGAADLGGTMRLGAYPAVLEEDSIVARAYQATEVSERHRHRYEVNNAYRDRIAESGLRFSGTSPDGHLVEFVEYDAEQHPFLVGTQAHPELKSRPTRPHPLFAAFIGAALDYKAAERLPVEIPEQRSNGVELLQEPASRG</sequence>
<protein>
    <recommendedName>
        <fullName evidence="1">CTP synthase</fullName>
        <ecNumber evidence="1">6.3.4.2</ecNumber>
    </recommendedName>
    <alternativeName>
        <fullName evidence="1">Cytidine 5'-triphosphate synthase</fullName>
    </alternativeName>
    <alternativeName>
        <fullName evidence="1">Cytidine triphosphate synthetase</fullName>
        <shortName evidence="1">CTP synthetase</shortName>
        <shortName evidence="1">CTPS</shortName>
    </alternativeName>
    <alternativeName>
        <fullName evidence="1">UTP--ammonia ligase</fullName>
    </alternativeName>
</protein>
<feature type="chain" id="PRO_1000139498" description="CTP synthase">
    <location>
        <begin position="1"/>
        <end position="579"/>
    </location>
</feature>
<feature type="domain" description="Glutamine amidotransferase type-1" evidence="1">
    <location>
        <begin position="306"/>
        <end position="554"/>
    </location>
</feature>
<feature type="region of interest" description="Amidoligase domain" evidence="1">
    <location>
        <begin position="1"/>
        <end position="281"/>
    </location>
</feature>
<feature type="active site" description="Nucleophile; for glutamine hydrolysis" evidence="1">
    <location>
        <position position="396"/>
    </location>
</feature>
<feature type="active site" evidence="1">
    <location>
        <position position="527"/>
    </location>
</feature>
<feature type="active site" evidence="1">
    <location>
        <position position="529"/>
    </location>
</feature>
<feature type="binding site" evidence="1">
    <location>
        <position position="23"/>
    </location>
    <ligand>
        <name>CTP</name>
        <dbReference type="ChEBI" id="CHEBI:37563"/>
        <note>allosteric inhibitor</note>
    </ligand>
</feature>
<feature type="binding site" evidence="1">
    <location>
        <position position="23"/>
    </location>
    <ligand>
        <name>UTP</name>
        <dbReference type="ChEBI" id="CHEBI:46398"/>
    </ligand>
</feature>
<feature type="binding site" evidence="1">
    <location>
        <begin position="24"/>
        <end position="29"/>
    </location>
    <ligand>
        <name>ATP</name>
        <dbReference type="ChEBI" id="CHEBI:30616"/>
    </ligand>
</feature>
<feature type="binding site" evidence="1">
    <location>
        <position position="81"/>
    </location>
    <ligand>
        <name>ATP</name>
        <dbReference type="ChEBI" id="CHEBI:30616"/>
    </ligand>
</feature>
<feature type="binding site" evidence="1">
    <location>
        <position position="81"/>
    </location>
    <ligand>
        <name>Mg(2+)</name>
        <dbReference type="ChEBI" id="CHEBI:18420"/>
    </ligand>
</feature>
<feature type="binding site" evidence="1">
    <location>
        <position position="155"/>
    </location>
    <ligand>
        <name>Mg(2+)</name>
        <dbReference type="ChEBI" id="CHEBI:18420"/>
    </ligand>
</feature>
<feature type="binding site" evidence="1">
    <location>
        <begin position="162"/>
        <end position="164"/>
    </location>
    <ligand>
        <name>CTP</name>
        <dbReference type="ChEBI" id="CHEBI:37563"/>
        <note>allosteric inhibitor</note>
    </ligand>
</feature>
<feature type="binding site" evidence="1">
    <location>
        <begin position="202"/>
        <end position="207"/>
    </location>
    <ligand>
        <name>CTP</name>
        <dbReference type="ChEBI" id="CHEBI:37563"/>
        <note>allosteric inhibitor</note>
    </ligand>
</feature>
<feature type="binding site" evidence="1">
    <location>
        <begin position="202"/>
        <end position="207"/>
    </location>
    <ligand>
        <name>UTP</name>
        <dbReference type="ChEBI" id="CHEBI:46398"/>
    </ligand>
</feature>
<feature type="binding site" evidence="1">
    <location>
        <position position="238"/>
    </location>
    <ligand>
        <name>CTP</name>
        <dbReference type="ChEBI" id="CHEBI:37563"/>
        <note>allosteric inhibitor</note>
    </ligand>
</feature>
<feature type="binding site" evidence="1">
    <location>
        <position position="238"/>
    </location>
    <ligand>
        <name>UTP</name>
        <dbReference type="ChEBI" id="CHEBI:46398"/>
    </ligand>
</feature>
<feature type="binding site" evidence="1">
    <location>
        <position position="369"/>
    </location>
    <ligand>
        <name>L-glutamine</name>
        <dbReference type="ChEBI" id="CHEBI:58359"/>
    </ligand>
</feature>
<feature type="binding site" evidence="1">
    <location>
        <begin position="397"/>
        <end position="400"/>
    </location>
    <ligand>
        <name>L-glutamine</name>
        <dbReference type="ChEBI" id="CHEBI:58359"/>
    </ligand>
</feature>
<feature type="binding site" evidence="1">
    <location>
        <position position="419"/>
    </location>
    <ligand>
        <name>L-glutamine</name>
        <dbReference type="ChEBI" id="CHEBI:58359"/>
    </ligand>
</feature>
<feature type="binding site" evidence="1">
    <location>
        <position position="480"/>
    </location>
    <ligand>
        <name>L-glutamine</name>
        <dbReference type="ChEBI" id="CHEBI:58359"/>
    </ligand>
</feature>
<proteinExistence type="inferred from homology"/>
<organism>
    <name type="scientific">Mycobacterium sp. (strain KMS)</name>
    <dbReference type="NCBI Taxonomy" id="189918"/>
    <lineage>
        <taxon>Bacteria</taxon>
        <taxon>Bacillati</taxon>
        <taxon>Actinomycetota</taxon>
        <taxon>Actinomycetes</taxon>
        <taxon>Mycobacteriales</taxon>
        <taxon>Mycobacteriaceae</taxon>
        <taxon>Mycobacterium</taxon>
    </lineage>
</organism>
<comment type="function">
    <text evidence="1">Catalyzes the ATP-dependent amination of UTP to CTP with either L-glutamine or ammonia as the source of nitrogen. Regulates intracellular CTP levels through interactions with the four ribonucleotide triphosphates.</text>
</comment>
<comment type="catalytic activity">
    <reaction evidence="1">
        <text>UTP + L-glutamine + ATP + H2O = CTP + L-glutamate + ADP + phosphate + 2 H(+)</text>
        <dbReference type="Rhea" id="RHEA:26426"/>
        <dbReference type="ChEBI" id="CHEBI:15377"/>
        <dbReference type="ChEBI" id="CHEBI:15378"/>
        <dbReference type="ChEBI" id="CHEBI:29985"/>
        <dbReference type="ChEBI" id="CHEBI:30616"/>
        <dbReference type="ChEBI" id="CHEBI:37563"/>
        <dbReference type="ChEBI" id="CHEBI:43474"/>
        <dbReference type="ChEBI" id="CHEBI:46398"/>
        <dbReference type="ChEBI" id="CHEBI:58359"/>
        <dbReference type="ChEBI" id="CHEBI:456216"/>
        <dbReference type="EC" id="6.3.4.2"/>
    </reaction>
</comment>
<comment type="catalytic activity">
    <reaction evidence="1">
        <text>L-glutamine + H2O = L-glutamate + NH4(+)</text>
        <dbReference type="Rhea" id="RHEA:15889"/>
        <dbReference type="ChEBI" id="CHEBI:15377"/>
        <dbReference type="ChEBI" id="CHEBI:28938"/>
        <dbReference type="ChEBI" id="CHEBI:29985"/>
        <dbReference type="ChEBI" id="CHEBI:58359"/>
    </reaction>
</comment>
<comment type="catalytic activity">
    <reaction evidence="1">
        <text>UTP + NH4(+) + ATP = CTP + ADP + phosphate + 2 H(+)</text>
        <dbReference type="Rhea" id="RHEA:16597"/>
        <dbReference type="ChEBI" id="CHEBI:15378"/>
        <dbReference type="ChEBI" id="CHEBI:28938"/>
        <dbReference type="ChEBI" id="CHEBI:30616"/>
        <dbReference type="ChEBI" id="CHEBI:37563"/>
        <dbReference type="ChEBI" id="CHEBI:43474"/>
        <dbReference type="ChEBI" id="CHEBI:46398"/>
        <dbReference type="ChEBI" id="CHEBI:456216"/>
    </reaction>
</comment>
<comment type="activity regulation">
    <text evidence="1">Allosterically activated by GTP, when glutamine is the substrate; GTP has no effect on the reaction when ammonia is the substrate. The allosteric effector GTP functions by stabilizing the protein conformation that binds the tetrahedral intermediate(s) formed during glutamine hydrolysis. Inhibited by the product CTP, via allosteric rather than competitive inhibition.</text>
</comment>
<comment type="pathway">
    <text evidence="1">Pyrimidine metabolism; CTP biosynthesis via de novo pathway; CTP from UDP: step 2/2.</text>
</comment>
<comment type="subunit">
    <text evidence="1">Homotetramer.</text>
</comment>
<comment type="miscellaneous">
    <text evidence="1">CTPSs have evolved a hybrid strategy for distinguishing between UTP and CTP. The overlapping regions of the product feedback inhibitory and substrate sites recognize a common feature in both compounds, the triphosphate moiety. To differentiate isosteric substrate and product pyrimidine rings, an additional pocket far from the expected kinase/ligase catalytic site, specifically recognizes the cytosine and ribose portions of the product inhibitor.</text>
</comment>
<comment type="similarity">
    <text evidence="1">Belongs to the CTP synthase family.</text>
</comment>
<keyword id="KW-0067">ATP-binding</keyword>
<keyword id="KW-0315">Glutamine amidotransferase</keyword>
<keyword id="KW-0436">Ligase</keyword>
<keyword id="KW-0460">Magnesium</keyword>
<keyword id="KW-0479">Metal-binding</keyword>
<keyword id="KW-0547">Nucleotide-binding</keyword>
<keyword id="KW-0665">Pyrimidine biosynthesis</keyword>
<accession>A1UH74</accession>